<proteinExistence type="predicted"/>
<reference key="1">
    <citation type="journal article" date="2005" name="Nat. Genet.">
        <title>Quantitative trait loci mapped to single-nucleotide resolution in yeast.</title>
        <authorList>
            <person name="Deutschbauer A.M."/>
            <person name="Davis R.W."/>
        </authorList>
    </citation>
    <scope>NUCLEOTIDE SEQUENCE [GENOMIC DNA]</scope>
    <source>
        <strain>SK1</strain>
    </source>
</reference>
<reference key="2">
    <citation type="journal article" date="1997" name="Yeast">
        <title>Sequence analysis of 203 kilobases from Saccharomyces cerevisiae chromosome VII.</title>
        <authorList>
            <person name="Rieger M."/>
            <person name="Brueckner M."/>
            <person name="Schaefer M."/>
            <person name="Mueller-Auer S."/>
        </authorList>
    </citation>
    <scope>NUCLEOTIDE SEQUENCE [GENOMIC DNA]</scope>
    <source>
        <strain>ATCC 204508 / S288c</strain>
    </source>
</reference>
<reference key="3">
    <citation type="journal article" date="1997" name="Nature">
        <title>The nucleotide sequence of Saccharomyces cerevisiae chromosome VII.</title>
        <authorList>
            <person name="Tettelin H."/>
            <person name="Agostoni-Carbone M.L."/>
            <person name="Albermann K."/>
            <person name="Albers M."/>
            <person name="Arroyo J."/>
            <person name="Backes U."/>
            <person name="Barreiros T."/>
            <person name="Bertani I."/>
            <person name="Bjourson A.J."/>
            <person name="Brueckner M."/>
            <person name="Bruschi C.V."/>
            <person name="Carignani G."/>
            <person name="Castagnoli L."/>
            <person name="Cerdan E."/>
            <person name="Clemente M.L."/>
            <person name="Coblenz A."/>
            <person name="Coglievina M."/>
            <person name="Coissac E."/>
            <person name="Defoor E."/>
            <person name="Del Bino S."/>
            <person name="Delius H."/>
            <person name="Delneri D."/>
            <person name="de Wergifosse P."/>
            <person name="Dujon B."/>
            <person name="Durand P."/>
            <person name="Entian K.-D."/>
            <person name="Eraso P."/>
            <person name="Escribano V."/>
            <person name="Fabiani L."/>
            <person name="Fartmann B."/>
            <person name="Feroli F."/>
            <person name="Feuermann M."/>
            <person name="Frontali L."/>
            <person name="Garcia-Gonzalez M."/>
            <person name="Garcia-Saez M.I."/>
            <person name="Goffeau A."/>
            <person name="Guerreiro P."/>
            <person name="Hani J."/>
            <person name="Hansen M."/>
            <person name="Hebling U."/>
            <person name="Hernandez K."/>
            <person name="Heumann K."/>
            <person name="Hilger F."/>
            <person name="Hofmann B."/>
            <person name="Indge K.J."/>
            <person name="James C.M."/>
            <person name="Klima R."/>
            <person name="Koetter P."/>
            <person name="Kramer B."/>
            <person name="Kramer W."/>
            <person name="Lauquin G."/>
            <person name="Leuther H."/>
            <person name="Louis E.J."/>
            <person name="Maillier E."/>
            <person name="Marconi A."/>
            <person name="Martegani E."/>
            <person name="Mazon M.J."/>
            <person name="Mazzoni C."/>
            <person name="McReynolds A.D.K."/>
            <person name="Melchioretto P."/>
            <person name="Mewes H.-W."/>
            <person name="Minenkova O."/>
            <person name="Mueller-Auer S."/>
            <person name="Nawrocki A."/>
            <person name="Netter P."/>
            <person name="Neu R."/>
            <person name="Nombela C."/>
            <person name="Oliver S.G."/>
            <person name="Panzeri L."/>
            <person name="Paoluzi S."/>
            <person name="Plevani P."/>
            <person name="Portetelle D."/>
            <person name="Portillo F."/>
            <person name="Potier S."/>
            <person name="Purnelle B."/>
            <person name="Rieger M."/>
            <person name="Riles L."/>
            <person name="Rinaldi T."/>
            <person name="Robben J."/>
            <person name="Rodrigues-Pousada C."/>
            <person name="Rodriguez-Belmonte E."/>
            <person name="Rodriguez-Torres A.M."/>
            <person name="Rose M."/>
            <person name="Ruzzi M."/>
            <person name="Saliola M."/>
            <person name="Sanchez-Perez M."/>
            <person name="Schaefer B."/>
            <person name="Schaefer M."/>
            <person name="Scharfe M."/>
            <person name="Schmidheini T."/>
            <person name="Schreer A."/>
            <person name="Skala J."/>
            <person name="Souciet J.-L."/>
            <person name="Steensma H.Y."/>
            <person name="Talla E."/>
            <person name="Thierry A."/>
            <person name="Vandenbol M."/>
            <person name="van der Aart Q.J.M."/>
            <person name="Van Dyck L."/>
            <person name="Vanoni M."/>
            <person name="Verhasselt P."/>
            <person name="Voet M."/>
            <person name="Volckaert G."/>
            <person name="Wambutt R."/>
            <person name="Watson M.D."/>
            <person name="Weber N."/>
            <person name="Wedler E."/>
            <person name="Wedler H."/>
            <person name="Wipfli P."/>
            <person name="Wolf K."/>
            <person name="Wright L.F."/>
            <person name="Zaccaria P."/>
            <person name="Zimmermann M."/>
            <person name="Zollner A."/>
            <person name="Kleine K."/>
        </authorList>
    </citation>
    <scope>NUCLEOTIDE SEQUENCE [LARGE SCALE GENOMIC DNA]</scope>
    <source>
        <strain>ATCC 204508 / S288c</strain>
    </source>
</reference>
<reference key="4">
    <citation type="journal article" date="2014" name="G3 (Bethesda)">
        <title>The reference genome sequence of Saccharomyces cerevisiae: Then and now.</title>
        <authorList>
            <person name="Engel S.R."/>
            <person name="Dietrich F.S."/>
            <person name="Fisk D.G."/>
            <person name="Binkley G."/>
            <person name="Balakrishnan R."/>
            <person name="Costanzo M.C."/>
            <person name="Dwight S.S."/>
            <person name="Hitz B.C."/>
            <person name="Karra K."/>
            <person name="Nash R.S."/>
            <person name="Weng S."/>
            <person name="Wong E.D."/>
            <person name="Lloyd P."/>
            <person name="Skrzypek M.S."/>
            <person name="Miyasato S.R."/>
            <person name="Simison M."/>
            <person name="Cherry J.M."/>
        </authorList>
    </citation>
    <scope>GENOME REANNOTATION</scope>
    <source>
        <strain>ATCC 204508 / S288c</strain>
    </source>
</reference>
<reference key="5">
    <citation type="journal article" date="2007" name="Genome Res.">
        <title>Approaching a complete repository of sequence-verified protein-encoding clones for Saccharomyces cerevisiae.</title>
        <authorList>
            <person name="Hu Y."/>
            <person name="Rolfs A."/>
            <person name="Bhullar B."/>
            <person name="Murthy T.V.S."/>
            <person name="Zhu C."/>
            <person name="Berger M.F."/>
            <person name="Camargo A.A."/>
            <person name="Kelley F."/>
            <person name="McCarron S."/>
            <person name="Jepson D."/>
            <person name="Richardson A."/>
            <person name="Raphael J."/>
            <person name="Moreira D."/>
            <person name="Taycher E."/>
            <person name="Zuo D."/>
            <person name="Mohr S."/>
            <person name="Kane M.F."/>
            <person name="Williamson J."/>
            <person name="Simpson A.J.G."/>
            <person name="Bulyk M.L."/>
            <person name="Harlow E."/>
            <person name="Marsischky G."/>
            <person name="Kolodner R.D."/>
            <person name="LaBaer J."/>
        </authorList>
    </citation>
    <scope>NUCLEOTIDE SEQUENCE [GENOMIC DNA]</scope>
    <source>
        <strain>ATCC 204508 / S288c</strain>
    </source>
</reference>
<gene>
    <name type="ordered locus">YGR025W</name>
</gene>
<sequence length="100" mass="11711">MTGYEPFKFFSIRMSSINSPSVIFKTIKTFNPGKTEEYRAKKAYVQDKGYLRQKRPCPFYYRIPTCTASKYSIGCASSKKLTYTRTKFKFNLVTQRENSL</sequence>
<protein>
    <recommendedName>
        <fullName>Uncharacterized protein YGR025W</fullName>
    </recommendedName>
</protein>
<accession>P53216</accession>
<accession>A0A1S0T078</accession>
<accession>Q45U58</accession>
<name>YG1H_YEAST</name>
<organism>
    <name type="scientific">Saccharomyces cerevisiae (strain ATCC 204508 / S288c)</name>
    <name type="common">Baker's yeast</name>
    <dbReference type="NCBI Taxonomy" id="559292"/>
    <lineage>
        <taxon>Eukaryota</taxon>
        <taxon>Fungi</taxon>
        <taxon>Dikarya</taxon>
        <taxon>Ascomycota</taxon>
        <taxon>Saccharomycotina</taxon>
        <taxon>Saccharomycetes</taxon>
        <taxon>Saccharomycetales</taxon>
        <taxon>Saccharomycetaceae</taxon>
        <taxon>Saccharomyces</taxon>
    </lineage>
</organism>
<keyword id="KW-1185">Reference proteome</keyword>
<dbReference type="EMBL" id="DQ115389">
    <property type="protein sequence ID" value="AAZ22488.1"/>
    <property type="molecule type" value="Genomic_DNA"/>
</dbReference>
<dbReference type="EMBL" id="Z72810">
    <property type="protein sequence ID" value="CAA97008.1"/>
    <property type="molecule type" value="Genomic_DNA"/>
</dbReference>
<dbReference type="EMBL" id="AY557769">
    <property type="protein sequence ID" value="AAS56095.1"/>
    <property type="molecule type" value="Genomic_DNA"/>
</dbReference>
<dbReference type="EMBL" id="BK006941">
    <property type="protein sequence ID" value="DAA80300.1"/>
    <property type="molecule type" value="Genomic_DNA"/>
</dbReference>
<dbReference type="PIR" id="S64316">
    <property type="entry name" value="S64316"/>
</dbReference>
<dbReference type="RefSeq" id="NP_001335780.1">
    <property type="nucleotide sequence ID" value="NM_001348839.1"/>
</dbReference>
<dbReference type="FunCoup" id="P53216">
    <property type="interactions" value="24"/>
</dbReference>
<dbReference type="PaxDb" id="4932-YGR025W"/>
<dbReference type="EnsemblFungi" id="YGR025W_mRNA">
    <property type="protein sequence ID" value="YGR025W"/>
    <property type="gene ID" value="YGR025W"/>
</dbReference>
<dbReference type="GeneID" id="852909"/>
<dbReference type="AGR" id="SGD:S000003257"/>
<dbReference type="SGD" id="S000003257">
    <property type="gene designation" value="YGR025W"/>
</dbReference>
<dbReference type="HOGENOM" id="CLU_2308255_0_0_1"/>
<dbReference type="InParanoid" id="P53216"/>
<dbReference type="ChiTaRS" id="YGR025W">
    <property type="organism name" value="yeast"/>
</dbReference>
<dbReference type="PRO" id="PR:P53216"/>
<dbReference type="Proteomes" id="UP000002311">
    <property type="component" value="Chromosome VII"/>
</dbReference>
<dbReference type="RNAct" id="P53216">
    <property type="molecule type" value="protein"/>
</dbReference>
<feature type="chain" id="PRO_0000202789" description="Uncharacterized protein YGR025W">
    <location>
        <begin position="1"/>
        <end position="100"/>
    </location>
</feature>